<gene>
    <name type="primary">rhaM</name>
    <name type="synonym">yiiL</name>
    <name type="ordered locus">b3901</name>
    <name type="ordered locus">JW3872</name>
</gene>
<comment type="function">
    <text evidence="1">Involved in the anomeric conversion of L-rhamnose.</text>
</comment>
<comment type="catalytic activity">
    <reaction evidence="1 2">
        <text>alpha-L-rhamnose = beta-L-rhamnose</text>
        <dbReference type="Rhea" id="RHEA:25584"/>
        <dbReference type="ChEBI" id="CHEBI:27586"/>
        <dbReference type="ChEBI" id="CHEBI:27907"/>
        <dbReference type="EC" id="5.1.3.32"/>
    </reaction>
</comment>
<comment type="pathway">
    <text>Carbohydrate metabolism; L-rhamnose metabolism.</text>
</comment>
<comment type="subunit">
    <text evidence="2">Homodimer.</text>
</comment>
<comment type="subcellular location">
    <subcellularLocation>
        <location evidence="3">Cytoplasm</location>
    </subcellularLocation>
</comment>
<comment type="similarity">
    <text evidence="3">Belongs to the rhamnose mutarotase family.</text>
</comment>
<reference key="1">
    <citation type="journal article" date="1993" name="Nucleic Acids Res.">
        <title>Analysis of the Escherichia coli genome. III. DNA sequence of the region from 87.2 to 89.2 minutes.</title>
        <authorList>
            <person name="Plunkett G. III"/>
            <person name="Burland V."/>
            <person name="Daniels D.L."/>
            <person name="Blattner F.R."/>
        </authorList>
    </citation>
    <scope>NUCLEOTIDE SEQUENCE [LARGE SCALE GENOMIC DNA]</scope>
    <source>
        <strain>K12 / MG1655 / ATCC 47076</strain>
    </source>
</reference>
<reference key="2">
    <citation type="journal article" date="1997" name="Science">
        <title>The complete genome sequence of Escherichia coli K-12.</title>
        <authorList>
            <person name="Blattner F.R."/>
            <person name="Plunkett G. III"/>
            <person name="Bloch C.A."/>
            <person name="Perna N.T."/>
            <person name="Burland V."/>
            <person name="Riley M."/>
            <person name="Collado-Vides J."/>
            <person name="Glasner J.D."/>
            <person name="Rode C.K."/>
            <person name="Mayhew G.F."/>
            <person name="Gregor J."/>
            <person name="Davis N.W."/>
            <person name="Kirkpatrick H.A."/>
            <person name="Goeden M.A."/>
            <person name="Rose D.J."/>
            <person name="Mau B."/>
            <person name="Shao Y."/>
        </authorList>
    </citation>
    <scope>NUCLEOTIDE SEQUENCE [LARGE SCALE GENOMIC DNA]</scope>
    <source>
        <strain>K12 / MG1655 / ATCC 47076</strain>
    </source>
</reference>
<reference key="3">
    <citation type="journal article" date="2006" name="Mol. Syst. Biol.">
        <title>Highly accurate genome sequences of Escherichia coli K-12 strains MG1655 and W3110.</title>
        <authorList>
            <person name="Hayashi K."/>
            <person name="Morooka N."/>
            <person name="Yamamoto Y."/>
            <person name="Fujita K."/>
            <person name="Isono K."/>
            <person name="Choi S."/>
            <person name="Ohtsubo E."/>
            <person name="Baba T."/>
            <person name="Wanner B.L."/>
            <person name="Mori H."/>
            <person name="Horiuchi T."/>
        </authorList>
    </citation>
    <scope>NUCLEOTIDE SEQUENCE [LARGE SCALE GENOMIC DNA]</scope>
    <source>
        <strain>K12 / W3110 / ATCC 27325 / DSM 5911</strain>
    </source>
</reference>
<reference key="4">
    <citation type="journal article" date="2004" name="J. Biol. Chem.">
        <title>NMR application probes a novel and ubiquitous family of enzymes that alter monosaccharide configuration.</title>
        <authorList>
            <person name="Ryu K.-S."/>
            <person name="Kim C."/>
            <person name="Kim I."/>
            <person name="Yoo S."/>
            <person name="Choi B.-S."/>
            <person name="Park C."/>
        </authorList>
    </citation>
    <scope>FUNCTION</scope>
    <scope>CATALYTIC ACTIVITY</scope>
</reference>
<reference key="5">
    <citation type="journal article" date="2005" name="J. Mol. Biol.">
        <title>Structural insights into the monosaccharide specificity of Escherichia coli rhamnose mutarotase.</title>
        <authorList>
            <person name="Ryu K.-S."/>
            <person name="Kim J.-I."/>
            <person name="Cho S.-J."/>
            <person name="Park D."/>
            <person name="Park C."/>
            <person name="Cheong H.-K."/>
            <person name="Lee J.-O."/>
            <person name="Choi B.-S."/>
        </authorList>
    </citation>
    <scope>X-RAY CRYSTALLOGRAPHY (1.8 ANGSTROMS) IN COMPLEX WITH L-RHAMNOSE</scope>
    <scope>CATALYTIC ACTIVITY</scope>
    <scope>SUBUNIT</scope>
    <scope>MUTAGENESIS OF TYR-18</scope>
    <scope>REACTION MECHANISM</scope>
</reference>
<keyword id="KW-0002">3D-structure</keyword>
<keyword id="KW-0119">Carbohydrate metabolism</keyword>
<keyword id="KW-0963">Cytoplasm</keyword>
<keyword id="KW-0413">Isomerase</keyword>
<keyword id="KW-1185">Reference proteome</keyword>
<keyword id="KW-0684">Rhamnose metabolism</keyword>
<feature type="chain" id="PRO_0000169687" description="L-rhamnose mutarotase">
    <location>
        <begin position="1"/>
        <end position="104"/>
    </location>
</feature>
<feature type="active site" description="Proton donor" evidence="3">
    <location>
        <position position="22"/>
    </location>
</feature>
<feature type="binding site">
    <location>
        <position position="18"/>
    </location>
    <ligand>
        <name>substrate</name>
    </ligand>
</feature>
<feature type="binding site">
    <location>
        <position position="41"/>
    </location>
    <ligand>
        <name>substrate</name>
    </ligand>
</feature>
<feature type="binding site">
    <location>
        <begin position="76"/>
        <end position="77"/>
    </location>
    <ligand>
        <name>substrate</name>
    </ligand>
</feature>
<feature type="mutagenesis site" description="Loss of mutarotase activity." evidence="2">
    <original>Y</original>
    <variation>F</variation>
    <location>
        <position position="18"/>
    </location>
</feature>
<feature type="strand" evidence="4">
    <location>
        <begin position="2"/>
        <end position="9"/>
    </location>
</feature>
<feature type="helix" evidence="4">
    <location>
        <begin position="15"/>
        <end position="20"/>
    </location>
</feature>
<feature type="turn" evidence="4">
    <location>
        <begin position="21"/>
        <end position="24"/>
    </location>
</feature>
<feature type="helix" evidence="4">
    <location>
        <begin position="27"/>
        <end position="35"/>
    </location>
</feature>
<feature type="strand" evidence="4">
    <location>
        <begin position="38"/>
        <end position="46"/>
    </location>
</feature>
<feature type="turn" evidence="4">
    <location>
        <begin position="47"/>
        <end position="50"/>
    </location>
</feature>
<feature type="strand" evidence="4">
    <location>
        <begin position="51"/>
        <end position="59"/>
    </location>
</feature>
<feature type="helix" evidence="4">
    <location>
        <begin position="61"/>
        <end position="66"/>
    </location>
</feature>
<feature type="helix" evidence="4">
    <location>
        <begin position="67"/>
        <end position="69"/>
    </location>
</feature>
<feature type="helix" evidence="4">
    <location>
        <begin position="71"/>
        <end position="80"/>
    </location>
</feature>
<feature type="turn" evidence="4">
    <location>
        <begin position="81"/>
        <end position="83"/>
    </location>
</feature>
<feature type="strand" evidence="4">
    <location>
        <begin position="94"/>
        <end position="96"/>
    </location>
</feature>
<feature type="strand" evidence="4">
    <location>
        <begin position="98"/>
        <end position="103"/>
    </location>
</feature>
<name>RHAM_ECOLI</name>
<evidence type="ECO:0000269" key="1">
    <source>
    </source>
</evidence>
<evidence type="ECO:0000269" key="2">
    <source>
    </source>
</evidence>
<evidence type="ECO:0000305" key="3"/>
<evidence type="ECO:0007829" key="4">
    <source>
        <dbReference type="PDB" id="1X8D"/>
    </source>
</evidence>
<proteinExistence type="evidence at protein level"/>
<organism>
    <name type="scientific">Escherichia coli (strain K12)</name>
    <dbReference type="NCBI Taxonomy" id="83333"/>
    <lineage>
        <taxon>Bacteria</taxon>
        <taxon>Pseudomonadati</taxon>
        <taxon>Pseudomonadota</taxon>
        <taxon>Gammaproteobacteria</taxon>
        <taxon>Enterobacterales</taxon>
        <taxon>Enterobacteriaceae</taxon>
        <taxon>Escherichia</taxon>
    </lineage>
</organism>
<dbReference type="EC" id="5.1.3.32" evidence="1 2"/>
<dbReference type="EMBL" id="L19201">
    <property type="protein sequence ID" value="AAB03034.1"/>
    <property type="molecule type" value="Genomic_DNA"/>
</dbReference>
<dbReference type="EMBL" id="U00096">
    <property type="protein sequence ID" value="AAC76883.1"/>
    <property type="molecule type" value="Genomic_DNA"/>
</dbReference>
<dbReference type="EMBL" id="AP009048">
    <property type="protein sequence ID" value="BAE77408.1"/>
    <property type="molecule type" value="Genomic_DNA"/>
</dbReference>
<dbReference type="PIR" id="S40845">
    <property type="entry name" value="S40845"/>
</dbReference>
<dbReference type="RefSeq" id="NP_418337.1">
    <property type="nucleotide sequence ID" value="NC_000913.3"/>
</dbReference>
<dbReference type="RefSeq" id="WP_000619493.1">
    <property type="nucleotide sequence ID" value="NZ_SSZK01000026.1"/>
</dbReference>
<dbReference type="PDB" id="1X8D">
    <property type="method" value="X-ray"/>
    <property type="resolution" value="1.80 A"/>
    <property type="chains" value="A/B/C/D=1-104"/>
</dbReference>
<dbReference type="PDBsum" id="1X8D"/>
<dbReference type="SMR" id="P32156"/>
<dbReference type="BioGRID" id="4262642">
    <property type="interactions" value="30"/>
</dbReference>
<dbReference type="FunCoup" id="P32156">
    <property type="interactions" value="289"/>
</dbReference>
<dbReference type="IntAct" id="P32156">
    <property type="interactions" value="2"/>
</dbReference>
<dbReference type="STRING" id="511145.b3901"/>
<dbReference type="PaxDb" id="511145-b3901"/>
<dbReference type="EnsemblBacteria" id="AAC76883">
    <property type="protein sequence ID" value="AAC76883"/>
    <property type="gene ID" value="b3901"/>
</dbReference>
<dbReference type="GeneID" id="75174142"/>
<dbReference type="GeneID" id="948402"/>
<dbReference type="KEGG" id="ecj:JW3872"/>
<dbReference type="KEGG" id="eco:b3901"/>
<dbReference type="KEGG" id="ecoc:C3026_21090"/>
<dbReference type="PATRIC" id="fig|1411691.4.peg.2805"/>
<dbReference type="EchoBASE" id="EB1811"/>
<dbReference type="eggNOG" id="COG3254">
    <property type="taxonomic scope" value="Bacteria"/>
</dbReference>
<dbReference type="HOGENOM" id="CLU_100689_2_0_6"/>
<dbReference type="InParanoid" id="P32156"/>
<dbReference type="OMA" id="WAYMADI"/>
<dbReference type="OrthoDB" id="9799608at2"/>
<dbReference type="PhylomeDB" id="P32156"/>
<dbReference type="BioCyc" id="EcoCyc:EG11865-MONOMER"/>
<dbReference type="BioCyc" id="MetaCyc:EG11865-MONOMER"/>
<dbReference type="BRENDA" id="5.1.3.32">
    <property type="organism ID" value="2026"/>
</dbReference>
<dbReference type="UniPathway" id="UPA00125"/>
<dbReference type="EvolutionaryTrace" id="P32156"/>
<dbReference type="PRO" id="PR:P32156"/>
<dbReference type="Proteomes" id="UP000000625">
    <property type="component" value="Chromosome"/>
</dbReference>
<dbReference type="GO" id="GO:0005737">
    <property type="term" value="C:cytoplasm"/>
    <property type="evidence" value="ECO:0007669"/>
    <property type="project" value="UniProtKB-SubCell"/>
</dbReference>
<dbReference type="GO" id="GO:0062192">
    <property type="term" value="F:L-rhamnose mutarotase activity"/>
    <property type="evidence" value="ECO:0000314"/>
    <property type="project" value="EcoCyc"/>
</dbReference>
<dbReference type="GO" id="GO:0042803">
    <property type="term" value="F:protein homodimerization activity"/>
    <property type="evidence" value="ECO:0000314"/>
    <property type="project" value="EcoCyc"/>
</dbReference>
<dbReference type="GO" id="GO:0016857">
    <property type="term" value="F:racemase and epimerase activity, acting on carbohydrates and derivatives"/>
    <property type="evidence" value="ECO:0000318"/>
    <property type="project" value="GO_Central"/>
</dbReference>
<dbReference type="GO" id="GO:0019301">
    <property type="term" value="P:rhamnose catabolic process"/>
    <property type="evidence" value="ECO:0000315"/>
    <property type="project" value="EcoCyc"/>
</dbReference>
<dbReference type="FunFam" id="3.30.70.100:FF:000013">
    <property type="entry name" value="L-rhamnose mutarotase"/>
    <property type="match status" value="1"/>
</dbReference>
<dbReference type="Gene3D" id="3.30.70.100">
    <property type="match status" value="1"/>
</dbReference>
<dbReference type="HAMAP" id="MF_01663">
    <property type="entry name" value="L_rham_rotase"/>
    <property type="match status" value="1"/>
</dbReference>
<dbReference type="InterPro" id="IPR011008">
    <property type="entry name" value="Dimeric_a/b-barrel"/>
</dbReference>
<dbReference type="InterPro" id="IPR013448">
    <property type="entry name" value="L-rhamnose_mutarotase"/>
</dbReference>
<dbReference type="InterPro" id="IPR008000">
    <property type="entry name" value="Rham/fucose_mutarotase"/>
</dbReference>
<dbReference type="NCBIfam" id="TIGR02625">
    <property type="entry name" value="YiiL_rotase"/>
    <property type="match status" value="1"/>
</dbReference>
<dbReference type="PANTHER" id="PTHR34389">
    <property type="entry name" value="L-RHAMNOSE MUTAROTASE"/>
    <property type="match status" value="1"/>
</dbReference>
<dbReference type="PANTHER" id="PTHR34389:SF2">
    <property type="entry name" value="L-RHAMNOSE MUTAROTASE"/>
    <property type="match status" value="1"/>
</dbReference>
<dbReference type="Pfam" id="PF05336">
    <property type="entry name" value="rhaM"/>
    <property type="match status" value="1"/>
</dbReference>
<dbReference type="SUPFAM" id="SSF54909">
    <property type="entry name" value="Dimeric alpha+beta barrel"/>
    <property type="match status" value="1"/>
</dbReference>
<accession>P32156</accession>
<accession>Q2M8J8</accession>
<protein>
    <recommendedName>
        <fullName>L-rhamnose mutarotase</fullName>
        <ecNumber evidence="1 2">5.1.3.32</ecNumber>
    </recommendedName>
    <alternativeName>
        <fullName>Rhamnose 1-epimerase</fullName>
    </alternativeName>
    <alternativeName>
        <fullName>Type-3 mutarotase</fullName>
    </alternativeName>
</protein>
<sequence length="104" mass="12265">MIRKAFVMQVNPDAHEEYQRRHNPIWPELEAVLKSHGAHNYAIYLDKARNLLFAMVEIESEERWNAVASTDVCQRWWKYMTDVMPANPDNSPVSSELQEVFYLP</sequence>